<feature type="chain" id="PRO_0000067880" description="DNA-directed RNA polymerase subunit beta'">
    <location>
        <begin position="1"/>
        <end position="684"/>
    </location>
</feature>
<feature type="binding site" evidence="1">
    <location>
        <position position="69"/>
    </location>
    <ligand>
        <name>Zn(2+)</name>
        <dbReference type="ChEBI" id="CHEBI:29105"/>
    </ligand>
</feature>
<feature type="binding site" evidence="1">
    <location>
        <position position="71"/>
    </location>
    <ligand>
        <name>Zn(2+)</name>
        <dbReference type="ChEBI" id="CHEBI:29105"/>
    </ligand>
</feature>
<feature type="binding site" evidence="1">
    <location>
        <position position="87"/>
    </location>
    <ligand>
        <name>Zn(2+)</name>
        <dbReference type="ChEBI" id="CHEBI:29105"/>
    </ligand>
</feature>
<feature type="binding site" evidence="1">
    <location>
        <position position="90"/>
    </location>
    <ligand>
        <name>Zn(2+)</name>
        <dbReference type="ChEBI" id="CHEBI:29105"/>
    </ligand>
</feature>
<feature type="binding site" evidence="1">
    <location>
        <position position="489"/>
    </location>
    <ligand>
        <name>Mg(2+)</name>
        <dbReference type="ChEBI" id="CHEBI:18420"/>
    </ligand>
</feature>
<feature type="binding site" evidence="1">
    <location>
        <position position="491"/>
    </location>
    <ligand>
        <name>Mg(2+)</name>
        <dbReference type="ChEBI" id="CHEBI:18420"/>
    </ligand>
</feature>
<feature type="binding site" evidence="1">
    <location>
        <position position="493"/>
    </location>
    <ligand>
        <name>Mg(2+)</name>
        <dbReference type="ChEBI" id="CHEBI:18420"/>
    </ligand>
</feature>
<comment type="function">
    <text evidence="1">DNA-dependent RNA polymerase catalyzes the transcription of DNA into RNA using the four ribonucleoside triphosphates as substrates.</text>
</comment>
<comment type="catalytic activity">
    <reaction evidence="1">
        <text>RNA(n) + a ribonucleoside 5'-triphosphate = RNA(n+1) + diphosphate</text>
        <dbReference type="Rhea" id="RHEA:21248"/>
        <dbReference type="Rhea" id="RHEA-COMP:14527"/>
        <dbReference type="Rhea" id="RHEA-COMP:17342"/>
        <dbReference type="ChEBI" id="CHEBI:33019"/>
        <dbReference type="ChEBI" id="CHEBI:61557"/>
        <dbReference type="ChEBI" id="CHEBI:140395"/>
        <dbReference type="EC" id="2.7.7.6"/>
    </reaction>
</comment>
<comment type="cofactor">
    <cofactor evidence="1">
        <name>Mg(2+)</name>
        <dbReference type="ChEBI" id="CHEBI:18420"/>
    </cofactor>
    <text evidence="1">Binds 1 Mg(2+) ion per subunit.</text>
</comment>
<comment type="cofactor">
    <cofactor evidence="1">
        <name>Zn(2+)</name>
        <dbReference type="ChEBI" id="CHEBI:29105"/>
    </cofactor>
    <text evidence="1">Binds 1 Zn(2+) ion per subunit.</text>
</comment>
<comment type="subunit">
    <text evidence="1">In plastids the minimal PEP RNA polymerase catalytic core is composed of four subunits: alpha, beta, beta', and beta''. When a (nuclear-encoded) sigma factor is associated with the core the holoenzyme is formed, which can initiate transcription.</text>
</comment>
<comment type="subcellular location">
    <subcellularLocation>
        <location evidence="1">Plastid</location>
        <location evidence="1">Chloroplast</location>
    </subcellularLocation>
</comment>
<comment type="similarity">
    <text evidence="1">Belongs to the RNA polymerase beta' chain family. RpoC1 subfamily.</text>
</comment>
<dbReference type="EC" id="2.7.7.6" evidence="1"/>
<dbReference type="EMBL" id="X04465">
    <property type="protein sequence ID" value="CAA28062.1"/>
    <property type="molecule type" value="Genomic_DNA"/>
</dbReference>
<dbReference type="PIR" id="A00697">
    <property type="entry name" value="RNLVC1"/>
</dbReference>
<dbReference type="RefSeq" id="NP_039276.1">
    <property type="nucleotide sequence ID" value="NC_001319.1"/>
</dbReference>
<dbReference type="SMR" id="P06273"/>
<dbReference type="GeneID" id="2702534"/>
<dbReference type="GO" id="GO:0009507">
    <property type="term" value="C:chloroplast"/>
    <property type="evidence" value="ECO:0007669"/>
    <property type="project" value="UniProtKB-SubCell"/>
</dbReference>
<dbReference type="GO" id="GO:0000428">
    <property type="term" value="C:DNA-directed RNA polymerase complex"/>
    <property type="evidence" value="ECO:0007669"/>
    <property type="project" value="UniProtKB-KW"/>
</dbReference>
<dbReference type="GO" id="GO:0005739">
    <property type="term" value="C:mitochondrion"/>
    <property type="evidence" value="ECO:0007669"/>
    <property type="project" value="GOC"/>
</dbReference>
<dbReference type="GO" id="GO:0003677">
    <property type="term" value="F:DNA binding"/>
    <property type="evidence" value="ECO:0007669"/>
    <property type="project" value="UniProtKB-UniRule"/>
</dbReference>
<dbReference type="GO" id="GO:0003899">
    <property type="term" value="F:DNA-directed RNA polymerase activity"/>
    <property type="evidence" value="ECO:0007669"/>
    <property type="project" value="UniProtKB-UniRule"/>
</dbReference>
<dbReference type="GO" id="GO:0000287">
    <property type="term" value="F:magnesium ion binding"/>
    <property type="evidence" value="ECO:0007669"/>
    <property type="project" value="UniProtKB-UniRule"/>
</dbReference>
<dbReference type="GO" id="GO:0008270">
    <property type="term" value="F:zinc ion binding"/>
    <property type="evidence" value="ECO:0007669"/>
    <property type="project" value="UniProtKB-UniRule"/>
</dbReference>
<dbReference type="GO" id="GO:0006351">
    <property type="term" value="P:DNA-templated transcription"/>
    <property type="evidence" value="ECO:0007669"/>
    <property type="project" value="UniProtKB-UniRule"/>
</dbReference>
<dbReference type="Gene3D" id="1.10.40.90">
    <property type="match status" value="1"/>
</dbReference>
<dbReference type="Gene3D" id="2.40.40.20">
    <property type="match status" value="1"/>
</dbReference>
<dbReference type="Gene3D" id="4.10.860.120">
    <property type="entry name" value="RNA polymerase II, clamp domain"/>
    <property type="match status" value="1"/>
</dbReference>
<dbReference type="Gene3D" id="1.10.274.100">
    <property type="entry name" value="RNA polymerase Rpb1, domain 3"/>
    <property type="match status" value="1"/>
</dbReference>
<dbReference type="HAMAP" id="MF_01323">
    <property type="entry name" value="RNApol_bact_RpoC1"/>
    <property type="match status" value="1"/>
</dbReference>
<dbReference type="InterPro" id="IPR045867">
    <property type="entry name" value="DNA-dir_RpoC_beta_prime"/>
</dbReference>
<dbReference type="InterPro" id="IPR000722">
    <property type="entry name" value="RNA_pol_asu"/>
</dbReference>
<dbReference type="InterPro" id="IPR006592">
    <property type="entry name" value="RNA_pol_N"/>
</dbReference>
<dbReference type="InterPro" id="IPR007080">
    <property type="entry name" value="RNA_pol_Rpb1_1"/>
</dbReference>
<dbReference type="InterPro" id="IPR007066">
    <property type="entry name" value="RNA_pol_Rpb1_3"/>
</dbReference>
<dbReference type="InterPro" id="IPR042102">
    <property type="entry name" value="RNA_pol_Rpb1_3_sf"/>
</dbReference>
<dbReference type="InterPro" id="IPR044893">
    <property type="entry name" value="RNA_pol_Rpb1_clamp_domain"/>
</dbReference>
<dbReference type="InterPro" id="IPR034678">
    <property type="entry name" value="RNApol_RpoC1"/>
</dbReference>
<dbReference type="PANTHER" id="PTHR19376">
    <property type="entry name" value="DNA-DIRECTED RNA POLYMERASE"/>
    <property type="match status" value="1"/>
</dbReference>
<dbReference type="PANTHER" id="PTHR19376:SF54">
    <property type="entry name" value="DNA-DIRECTED RNA POLYMERASE SUBUNIT BETA"/>
    <property type="match status" value="1"/>
</dbReference>
<dbReference type="Pfam" id="PF04997">
    <property type="entry name" value="RNA_pol_Rpb1_1"/>
    <property type="match status" value="1"/>
</dbReference>
<dbReference type="Pfam" id="PF00623">
    <property type="entry name" value="RNA_pol_Rpb1_2"/>
    <property type="match status" value="2"/>
</dbReference>
<dbReference type="Pfam" id="PF04983">
    <property type="entry name" value="RNA_pol_Rpb1_3"/>
    <property type="match status" value="1"/>
</dbReference>
<dbReference type="SMART" id="SM00663">
    <property type="entry name" value="RPOLA_N"/>
    <property type="match status" value="1"/>
</dbReference>
<dbReference type="SUPFAM" id="SSF64484">
    <property type="entry name" value="beta and beta-prime subunits of DNA dependent RNA-polymerase"/>
    <property type="match status" value="1"/>
</dbReference>
<accession>P06273</accession>
<name>RPOC1_MARPO</name>
<organism>
    <name type="scientific">Marchantia polymorpha</name>
    <name type="common">Common liverwort</name>
    <name type="synonym">Marchantia aquatica</name>
    <dbReference type="NCBI Taxonomy" id="3197"/>
    <lineage>
        <taxon>Eukaryota</taxon>
        <taxon>Viridiplantae</taxon>
        <taxon>Streptophyta</taxon>
        <taxon>Embryophyta</taxon>
        <taxon>Marchantiophyta</taxon>
        <taxon>Marchantiopsida</taxon>
        <taxon>Marchantiidae</taxon>
        <taxon>Marchantiales</taxon>
        <taxon>Marchantiaceae</taxon>
        <taxon>Marchantia</taxon>
    </lineage>
</organism>
<proteinExistence type="inferred from homology"/>
<evidence type="ECO:0000255" key="1">
    <source>
        <dbReference type="HAMAP-Rule" id="MF_01323"/>
    </source>
</evidence>
<sequence length="684" mass="78961">MTYQKKHQHLRIELASPEQIRNWAERVLPNGEIVGQVTKPYTLHYKTHKPEKDGLFCEKIFGPIKSGICACGKYQGIEKKKENIKFCEQCGVEFIESRIRRYRMGYIKLACSVTHVWYLKRLPSYIANLLAKPLKELESLVYCDLFLARPITKKPTLLKLQGLFKYEDQSWKDIFPRFFSPRGFEVFQNREIATGGDAIQKQLTNLNLQNVINLAHLEWKEFAEQKSTGNEWEDRKIQRRKDLLVRRIKLAKHFIQTNIKPEWMVLSLLPVLPPELRPMIELGEGELITSDLNELYRRVIYRNNTLLDFLARSGSTPGGLVVCQKRLVQEAVDALIDNGIRGQPMKDSHNRPYKSFSDLIEGKEGRFRENLLGKRVDYSGRSVIVVGPFLPLHQCGLPREMAIELFQAFVIRGLIGRNFAPNLRAAKTMIQNKEPIIWKVLQEVMQGHPILLNRAPTLHRLGIQAFQPILVNGRAIHLHPLVCGGFNADFDGDQMAVHIPLSLEAQAEARLLMLSHKNLLSPATGEPISVPSQDMLLGLYILTIENNQGIYGNKYNPSKKYDSKKKFSQIPYFSSYDNVFRALQQKQIYLHSSLWLRWQINLRIITLLNQEGPIEIQYKSFGNSFQIYEHYQLRKNKNQEIISTYICTTAGRILFNQQIEEAIQGTYKASLKQKTFVQKIEKNG</sequence>
<protein>
    <recommendedName>
        <fullName evidence="1">DNA-directed RNA polymerase subunit beta'</fullName>
        <ecNumber evidence="1">2.7.7.6</ecNumber>
    </recommendedName>
    <alternativeName>
        <fullName evidence="1">PEP</fullName>
    </alternativeName>
    <alternativeName>
        <fullName evidence="1">Plastid-encoded RNA polymerase subunit beta'</fullName>
        <shortName evidence="1">RNA polymerase subunit beta'</shortName>
    </alternativeName>
</protein>
<geneLocation type="chloroplast"/>
<gene>
    <name evidence="1" type="primary">rpoC1</name>
</gene>
<reference key="1">
    <citation type="journal article" date="1986" name="Nature">
        <title>Chloroplast gene organization deduced from complete sequence of liverwort Marchantia polymorpha chloroplast DNA.</title>
        <authorList>
            <person name="Ohyama K."/>
            <person name="Fukuzawa H."/>
            <person name="Kohchi T."/>
            <person name="Shirai H."/>
            <person name="Sano T."/>
            <person name="Sano S."/>
            <person name="Umesono K."/>
            <person name="Shiki Y."/>
            <person name="Takeuchi M."/>
            <person name="Chang Z."/>
            <person name="Aota S."/>
            <person name="Inokuchi H."/>
            <person name="Ozeki H."/>
        </authorList>
    </citation>
    <scope>NUCLEOTIDE SEQUENCE [LARGE SCALE GENOMIC DNA]</scope>
</reference>
<reference key="2">
    <citation type="journal article" date="1988" name="J. Mol. Biol.">
        <title>Structure and organization of Marchantia polymorpha chloroplast genome. II. Gene organization of the large single copy region from rps'12 to atpB.</title>
        <authorList>
            <person name="Umesono K."/>
            <person name="Inokuchi H."/>
            <person name="Shiki Y."/>
            <person name="Takeuchi M."/>
            <person name="Chang Z."/>
            <person name="Fukuzawa H."/>
            <person name="Kohchi T."/>
            <person name="Shirai H."/>
            <person name="Ohyama K."/>
            <person name="Ozeki H."/>
        </authorList>
    </citation>
    <scope>NUCLEOTIDE SEQUENCE [GENOMIC DNA]</scope>
</reference>
<keyword id="KW-0150">Chloroplast</keyword>
<keyword id="KW-0240">DNA-directed RNA polymerase</keyword>
<keyword id="KW-0460">Magnesium</keyword>
<keyword id="KW-0479">Metal-binding</keyword>
<keyword id="KW-0548">Nucleotidyltransferase</keyword>
<keyword id="KW-0934">Plastid</keyword>
<keyword id="KW-0804">Transcription</keyword>
<keyword id="KW-0808">Transferase</keyword>
<keyword id="KW-0862">Zinc</keyword>